<name>NANE_MALP2</name>
<proteinExistence type="inferred from homology"/>
<keyword id="KW-0119">Carbohydrate metabolism</keyword>
<keyword id="KW-0413">Isomerase</keyword>
<keyword id="KW-1185">Reference proteome</keyword>
<dbReference type="EC" id="5.1.3.9" evidence="1"/>
<dbReference type="EMBL" id="BA000026">
    <property type="protein sequence ID" value="BAC43965.1"/>
    <property type="molecule type" value="Genomic_DNA"/>
</dbReference>
<dbReference type="RefSeq" id="WP_011077001.1">
    <property type="nucleotide sequence ID" value="NC_004432.1"/>
</dbReference>
<dbReference type="SMR" id="Q8EWM9"/>
<dbReference type="STRING" id="272633.gene:10731273"/>
<dbReference type="KEGG" id="mpe:MYPE1740"/>
<dbReference type="eggNOG" id="COG3010">
    <property type="taxonomic scope" value="Bacteria"/>
</dbReference>
<dbReference type="HOGENOM" id="CLU_086300_1_0_14"/>
<dbReference type="InParanoid" id="Q8EWM9"/>
<dbReference type="UniPathway" id="UPA00629">
    <property type="reaction ID" value="UER00682"/>
</dbReference>
<dbReference type="Proteomes" id="UP000002522">
    <property type="component" value="Chromosome"/>
</dbReference>
<dbReference type="GO" id="GO:0005829">
    <property type="term" value="C:cytosol"/>
    <property type="evidence" value="ECO:0007669"/>
    <property type="project" value="TreeGrafter"/>
</dbReference>
<dbReference type="GO" id="GO:0047465">
    <property type="term" value="F:N-acylglucosamine-6-phosphate 2-epimerase activity"/>
    <property type="evidence" value="ECO:0007669"/>
    <property type="project" value="UniProtKB-EC"/>
</dbReference>
<dbReference type="GO" id="GO:0005975">
    <property type="term" value="P:carbohydrate metabolic process"/>
    <property type="evidence" value="ECO:0007669"/>
    <property type="project" value="UniProtKB-UniRule"/>
</dbReference>
<dbReference type="GO" id="GO:0006053">
    <property type="term" value="P:N-acetylmannosamine catabolic process"/>
    <property type="evidence" value="ECO:0007669"/>
    <property type="project" value="TreeGrafter"/>
</dbReference>
<dbReference type="GO" id="GO:0019262">
    <property type="term" value="P:N-acetylneuraminate catabolic process"/>
    <property type="evidence" value="ECO:0007669"/>
    <property type="project" value="UniProtKB-UniRule"/>
</dbReference>
<dbReference type="CDD" id="cd04729">
    <property type="entry name" value="NanE"/>
    <property type="match status" value="1"/>
</dbReference>
<dbReference type="Gene3D" id="3.20.20.70">
    <property type="entry name" value="Aldolase class I"/>
    <property type="match status" value="1"/>
</dbReference>
<dbReference type="HAMAP" id="MF_01235">
    <property type="entry name" value="ManNAc6P_epimer"/>
    <property type="match status" value="1"/>
</dbReference>
<dbReference type="InterPro" id="IPR013785">
    <property type="entry name" value="Aldolase_TIM"/>
</dbReference>
<dbReference type="InterPro" id="IPR007260">
    <property type="entry name" value="NanE"/>
</dbReference>
<dbReference type="InterPro" id="IPR011060">
    <property type="entry name" value="RibuloseP-bd_barrel"/>
</dbReference>
<dbReference type="NCBIfam" id="NF002231">
    <property type="entry name" value="PRK01130.1"/>
    <property type="match status" value="1"/>
</dbReference>
<dbReference type="PANTHER" id="PTHR36204">
    <property type="entry name" value="N-ACETYLMANNOSAMINE-6-PHOSPHATE 2-EPIMERASE-RELATED"/>
    <property type="match status" value="1"/>
</dbReference>
<dbReference type="PANTHER" id="PTHR36204:SF1">
    <property type="entry name" value="N-ACETYLMANNOSAMINE-6-PHOSPHATE 2-EPIMERASE-RELATED"/>
    <property type="match status" value="1"/>
</dbReference>
<dbReference type="Pfam" id="PF04131">
    <property type="entry name" value="NanE"/>
    <property type="match status" value="1"/>
</dbReference>
<dbReference type="SUPFAM" id="SSF51366">
    <property type="entry name" value="Ribulose-phoshate binding barrel"/>
    <property type="match status" value="1"/>
</dbReference>
<feature type="chain" id="PRO_0000179785" description="Putative N-acetylmannosamine-6-phosphate 2-epimerase">
    <location>
        <begin position="1"/>
        <end position="230"/>
    </location>
</feature>
<evidence type="ECO:0000255" key="1">
    <source>
        <dbReference type="HAMAP-Rule" id="MF_01235"/>
    </source>
</evidence>
<protein>
    <recommendedName>
        <fullName evidence="1">Putative N-acetylmannosamine-6-phosphate 2-epimerase</fullName>
        <ecNumber evidence="1">5.1.3.9</ecNumber>
    </recommendedName>
    <alternativeName>
        <fullName evidence="1">ManNAc-6-P epimerase</fullName>
    </alternativeName>
</protein>
<comment type="function">
    <text evidence="1">Converts N-acetylmannosamine-6-phosphate (ManNAc-6-P) to N-acetylglucosamine-6-phosphate (GlcNAc-6-P).</text>
</comment>
<comment type="catalytic activity">
    <reaction evidence="1">
        <text>an N-acyl-D-glucosamine 6-phosphate = an N-acyl-D-mannosamine 6-phosphate</text>
        <dbReference type="Rhea" id="RHEA:23932"/>
        <dbReference type="ChEBI" id="CHEBI:57599"/>
        <dbReference type="ChEBI" id="CHEBI:57666"/>
        <dbReference type="EC" id="5.1.3.9"/>
    </reaction>
</comment>
<comment type="pathway">
    <text evidence="1">Amino-sugar metabolism; N-acetylneuraminate degradation; D-fructose 6-phosphate from N-acetylneuraminate: step 3/5.</text>
</comment>
<comment type="similarity">
    <text evidence="1">Belongs to the NanE family.</text>
</comment>
<accession>Q8EWM9</accession>
<organism>
    <name type="scientific">Malacoplasma penetrans (strain HF-2)</name>
    <name type="common">Mycoplasma penetrans</name>
    <dbReference type="NCBI Taxonomy" id="272633"/>
    <lineage>
        <taxon>Bacteria</taxon>
        <taxon>Bacillati</taxon>
        <taxon>Mycoplasmatota</taxon>
        <taxon>Mycoplasmoidales</taxon>
        <taxon>Mycoplasmoidaceae</taxon>
        <taxon>Malacoplasma</taxon>
    </lineage>
</organism>
<gene>
    <name evidence="1" type="primary">nanE</name>
    <name type="ordered locus">MYPE1740</name>
</gene>
<sequence length="230" mass="25403">MKDVILRKIKNNLVVSCQAVGEETLNNDIAITLMAKACLEGGAKVLRLSQYSHIKSIKSISGKTPIIGLIKSNYENSEVIITPSIKEVDLLLSLNVDCIAIDATNRKRPSETLEVIFKYCREKSPNTLLMADCATIDDVKNADKLGFDLIGTTLRGYTKETFGKSNMDNDYSFIKECLSSIKTPLIAEGGIWEPYQVKDLLDLGCFAVVVGSAITRPKEITKYFLKALDN</sequence>
<reference key="1">
    <citation type="journal article" date="2002" name="Nucleic Acids Res.">
        <title>The complete genomic sequence of Mycoplasma penetrans, an intracellular bacterial pathogen in humans.</title>
        <authorList>
            <person name="Sasaki Y."/>
            <person name="Ishikawa J."/>
            <person name="Yamashita A."/>
            <person name="Oshima K."/>
            <person name="Kenri T."/>
            <person name="Furuya K."/>
            <person name="Yoshino C."/>
            <person name="Horino A."/>
            <person name="Shiba T."/>
            <person name="Sasaki T."/>
            <person name="Hattori M."/>
        </authorList>
    </citation>
    <scope>NUCLEOTIDE SEQUENCE [LARGE SCALE GENOMIC DNA]</scope>
    <source>
        <strain>HF-2</strain>
    </source>
</reference>